<keyword id="KW-0963">Cytoplasm</keyword>
<keyword id="KW-0460">Magnesium</keyword>
<keyword id="KW-0479">Metal-binding</keyword>
<keyword id="KW-0548">Nucleotidyltransferase</keyword>
<keyword id="KW-0694">RNA-binding</keyword>
<keyword id="KW-0808">Transferase</keyword>
<sequence>MEGPEIKAVEAVIDNGSFGKRTLRFETGRLAQQADGAVAAYLDDDSMILSTTTAGSSPKENYDFFPLTVDVEEKMYAAGKIPGSFFRREGRPSSEAILACRIIDRPLRPLFPHTLRNEVQVVETVLAVNPDDAYDVIALNAASASTMISGLPFEGPVSGVRLALIDGQWVAFPRWSERERAVFEIVVAGRVVENGDVAIAMIEAGAGKNAWHLIYDEGQTKPDEEVVAGGLEAAKPFIKVICEAQDELKKIAAKETKEFQLFPEYTDELYARIDEIAHKDLDEALSIAEKLPRQDRIHEIKEHVREVLADEFTDMDDAEKDKELGNAFKELQRQIVRRRILTEDYRIDGRGLRDIRTLSAEVDIVPRVHGSALFQRGETQILGVTTLNMLKMEQQIDALSGPQSKRYMHNYEMPPYSTGETGRVGSPKRREIGHGALAEKALVPVLPSREEFPYAIRQVSEAIGSNGSTSMGSVCASTLSLLAAGVPLKAPVAGIAMGLVSGDVDGQHIFKTLTDILGAEDAFGDMDFKVAGTSEFITALQLDTKLDGIPADILAAALQQAKEARATILEVINECIDGPAEMSEFAPRIITTSVPVEKIGEVIGPKGKMINQIQEDTGAEIAIEDDGTVFISSEGGEAAKKAKSIIDSIANPHVPEAGETYNGKVVKTTSFGAFVNLTPGTDGLLHISQIRNLANGERIDAVEDVLREGDTVEVIVQGVDDRGKISLAIPGFEDQENNARPSRGDRDDRRGGRGRGDRDDRRGGRGRRSDRDDRDFDDRDDRPRRRRSDDFEDDYDDRPRRRRSDDRDFDRDDRDDDRPRRRRSADRDFDDRDDRDARDSRDDDRPRRRRSADRDDRGDRDDRRGGFRGGRGRGSDRNPRYATDDNYDDYRADREERTERPRRRVRRDFDPFED</sequence>
<feature type="chain" id="PRO_0000381867" description="Polyribonucleotide nucleotidyltransferase">
    <location>
        <begin position="1"/>
        <end position="914"/>
    </location>
</feature>
<feature type="domain" description="KH" evidence="1">
    <location>
        <begin position="587"/>
        <end position="646"/>
    </location>
</feature>
<feature type="domain" description="S1 motif" evidence="1">
    <location>
        <begin position="658"/>
        <end position="730"/>
    </location>
</feature>
<feature type="region of interest" description="Disordered" evidence="2">
    <location>
        <begin position="407"/>
        <end position="427"/>
    </location>
</feature>
<feature type="region of interest" description="Disordered" evidence="2">
    <location>
        <begin position="727"/>
        <end position="914"/>
    </location>
</feature>
<feature type="compositionally biased region" description="Basic and acidic residues" evidence="2">
    <location>
        <begin position="742"/>
        <end position="789"/>
    </location>
</feature>
<feature type="compositionally biased region" description="Basic and acidic residues" evidence="2">
    <location>
        <begin position="797"/>
        <end position="865"/>
    </location>
</feature>
<feature type="compositionally biased region" description="Basic and acidic residues" evidence="2">
    <location>
        <begin position="873"/>
        <end position="899"/>
    </location>
</feature>
<feature type="binding site" evidence="1">
    <location>
        <position position="521"/>
    </location>
    <ligand>
        <name>Mg(2+)</name>
        <dbReference type="ChEBI" id="CHEBI:18420"/>
    </ligand>
</feature>
<feature type="binding site" evidence="1">
    <location>
        <position position="527"/>
    </location>
    <ligand>
        <name>Mg(2+)</name>
        <dbReference type="ChEBI" id="CHEBI:18420"/>
    </ligand>
</feature>
<name>PNP_BIFLS</name>
<reference key="1">
    <citation type="journal article" date="2008" name="Proc. Natl. Acad. Sci. U.S.A.">
        <title>The genome sequence of Bifidobacterium longum subsp. infantis reveals adaptations for milk utilization within the infant microbiome.</title>
        <authorList>
            <person name="Sela D.A."/>
            <person name="Chapman J."/>
            <person name="Adeuya A."/>
            <person name="Kim J.H."/>
            <person name="Chen F."/>
            <person name="Whitehead T.R."/>
            <person name="Lapidus A."/>
            <person name="Rokhsar D.S."/>
            <person name="Lebrilla C.B."/>
            <person name="German J.B."/>
            <person name="Price N.P."/>
            <person name="Richardson P.M."/>
            <person name="Mills D.A."/>
        </authorList>
    </citation>
    <scope>NUCLEOTIDE SEQUENCE [LARGE SCALE GENOMIC DNA]</scope>
    <source>
        <strain>ATCC 15697 / DSM 20088 / JCM 1222 / NCTC 11817 / S12</strain>
    </source>
</reference>
<reference key="2">
    <citation type="journal article" date="2011" name="Nature">
        <title>Bifidobacteria can protect from enteropathogenic infection through production of acetate.</title>
        <authorList>
            <person name="Fukuda S."/>
            <person name="Toh H."/>
            <person name="Hase K."/>
            <person name="Oshima K."/>
            <person name="Nakanishi Y."/>
            <person name="Yoshimura K."/>
            <person name="Tobe T."/>
            <person name="Clarke J.M."/>
            <person name="Topping D.L."/>
            <person name="Suzuki T."/>
            <person name="Taylor T.D."/>
            <person name="Itoh K."/>
            <person name="Kikuchi J."/>
            <person name="Morita H."/>
            <person name="Hattori M."/>
            <person name="Ohno H."/>
        </authorList>
    </citation>
    <scope>NUCLEOTIDE SEQUENCE [LARGE SCALE GENOMIC DNA]</scope>
    <source>
        <strain>ATCC 15697 / DSM 20088 / JCM 1222 / NCTC 11817 / S12</strain>
    </source>
</reference>
<evidence type="ECO:0000255" key="1">
    <source>
        <dbReference type="HAMAP-Rule" id="MF_01595"/>
    </source>
</evidence>
<evidence type="ECO:0000256" key="2">
    <source>
        <dbReference type="SAM" id="MobiDB-lite"/>
    </source>
</evidence>
<organism>
    <name type="scientific">Bifidobacterium longum subsp. infantis (strain ATCC 15697 / DSM 20088 / JCM 1222 / NCTC 11817 / S12)</name>
    <dbReference type="NCBI Taxonomy" id="391904"/>
    <lineage>
        <taxon>Bacteria</taxon>
        <taxon>Bacillati</taxon>
        <taxon>Actinomycetota</taxon>
        <taxon>Actinomycetes</taxon>
        <taxon>Bifidobacteriales</taxon>
        <taxon>Bifidobacteriaceae</taxon>
        <taxon>Bifidobacterium</taxon>
    </lineage>
</organism>
<accession>B7GNH2</accession>
<accession>E8MNQ3</accession>
<comment type="function">
    <text evidence="1">Involved in mRNA degradation. Catalyzes the phosphorolysis of single-stranded polyribonucleotides processively in the 3'- to 5'-direction.</text>
</comment>
<comment type="catalytic activity">
    <reaction evidence="1">
        <text>RNA(n+1) + phosphate = RNA(n) + a ribonucleoside 5'-diphosphate</text>
        <dbReference type="Rhea" id="RHEA:22096"/>
        <dbReference type="Rhea" id="RHEA-COMP:14527"/>
        <dbReference type="Rhea" id="RHEA-COMP:17342"/>
        <dbReference type="ChEBI" id="CHEBI:43474"/>
        <dbReference type="ChEBI" id="CHEBI:57930"/>
        <dbReference type="ChEBI" id="CHEBI:140395"/>
        <dbReference type="EC" id="2.7.7.8"/>
    </reaction>
</comment>
<comment type="cofactor">
    <cofactor evidence="1">
        <name>Mg(2+)</name>
        <dbReference type="ChEBI" id="CHEBI:18420"/>
    </cofactor>
</comment>
<comment type="subcellular location">
    <subcellularLocation>
        <location evidence="1">Cytoplasm</location>
    </subcellularLocation>
</comment>
<comment type="similarity">
    <text evidence="1">Belongs to the polyribonucleotide nucleotidyltransferase family.</text>
</comment>
<gene>
    <name evidence="1" type="primary">pnp</name>
    <name type="ordered locus">Blon_2270</name>
    <name type="ordered locus">BLIJ_2342</name>
</gene>
<protein>
    <recommendedName>
        <fullName evidence="1">Polyribonucleotide nucleotidyltransferase</fullName>
        <ecNumber evidence="1">2.7.7.8</ecNumber>
    </recommendedName>
    <alternativeName>
        <fullName evidence="1">Polynucleotide phosphorylase</fullName>
        <shortName evidence="1">PNPase</shortName>
    </alternativeName>
</protein>
<proteinExistence type="inferred from homology"/>
<dbReference type="EC" id="2.7.7.8" evidence="1"/>
<dbReference type="EMBL" id="CP001095">
    <property type="protein sequence ID" value="ACJ53328.1"/>
    <property type="molecule type" value="Genomic_DNA"/>
</dbReference>
<dbReference type="EMBL" id="AP010889">
    <property type="protein sequence ID" value="BAJ69919.1"/>
    <property type="molecule type" value="Genomic_DNA"/>
</dbReference>
<dbReference type="RefSeq" id="WP_012578501.1">
    <property type="nucleotide sequence ID" value="NC_011593.1"/>
</dbReference>
<dbReference type="SMR" id="B7GNH2"/>
<dbReference type="KEGG" id="bln:Blon_2270"/>
<dbReference type="KEGG" id="blon:BLIJ_2342"/>
<dbReference type="PATRIC" id="fig|391904.8.peg.2345"/>
<dbReference type="HOGENOM" id="CLU_004217_1_0_11"/>
<dbReference type="Proteomes" id="UP000001360">
    <property type="component" value="Chromosome"/>
</dbReference>
<dbReference type="GO" id="GO:0005829">
    <property type="term" value="C:cytosol"/>
    <property type="evidence" value="ECO:0007669"/>
    <property type="project" value="TreeGrafter"/>
</dbReference>
<dbReference type="GO" id="GO:0000175">
    <property type="term" value="F:3'-5'-RNA exonuclease activity"/>
    <property type="evidence" value="ECO:0007669"/>
    <property type="project" value="TreeGrafter"/>
</dbReference>
<dbReference type="GO" id="GO:0000287">
    <property type="term" value="F:magnesium ion binding"/>
    <property type="evidence" value="ECO:0007669"/>
    <property type="project" value="UniProtKB-UniRule"/>
</dbReference>
<dbReference type="GO" id="GO:0004654">
    <property type="term" value="F:polyribonucleotide nucleotidyltransferase activity"/>
    <property type="evidence" value="ECO:0007669"/>
    <property type="project" value="UniProtKB-UniRule"/>
</dbReference>
<dbReference type="GO" id="GO:0003723">
    <property type="term" value="F:RNA binding"/>
    <property type="evidence" value="ECO:0007669"/>
    <property type="project" value="UniProtKB-UniRule"/>
</dbReference>
<dbReference type="GO" id="GO:0006402">
    <property type="term" value="P:mRNA catabolic process"/>
    <property type="evidence" value="ECO:0007669"/>
    <property type="project" value="UniProtKB-UniRule"/>
</dbReference>
<dbReference type="GO" id="GO:0006396">
    <property type="term" value="P:RNA processing"/>
    <property type="evidence" value="ECO:0007669"/>
    <property type="project" value="InterPro"/>
</dbReference>
<dbReference type="CDD" id="cd02393">
    <property type="entry name" value="KH-I_PNPase"/>
    <property type="match status" value="1"/>
</dbReference>
<dbReference type="CDD" id="cd11364">
    <property type="entry name" value="RNase_PH_PNPase_2"/>
    <property type="match status" value="1"/>
</dbReference>
<dbReference type="CDD" id="cd04472">
    <property type="entry name" value="S1_PNPase"/>
    <property type="match status" value="1"/>
</dbReference>
<dbReference type="FunFam" id="3.30.1370.10:FF:000001">
    <property type="entry name" value="Polyribonucleotide nucleotidyltransferase"/>
    <property type="match status" value="1"/>
</dbReference>
<dbReference type="FunFam" id="3.30.230.70:FF:000001">
    <property type="entry name" value="Polyribonucleotide nucleotidyltransferase"/>
    <property type="match status" value="1"/>
</dbReference>
<dbReference type="FunFam" id="3.30.230.70:FF:000002">
    <property type="entry name" value="Polyribonucleotide nucleotidyltransferase"/>
    <property type="match status" value="1"/>
</dbReference>
<dbReference type="Gene3D" id="3.30.230.70">
    <property type="entry name" value="GHMP Kinase, N-terminal domain"/>
    <property type="match status" value="2"/>
</dbReference>
<dbReference type="Gene3D" id="3.30.1370.10">
    <property type="entry name" value="K Homology domain, type 1"/>
    <property type="match status" value="1"/>
</dbReference>
<dbReference type="Gene3D" id="2.40.50.140">
    <property type="entry name" value="Nucleic acid-binding proteins"/>
    <property type="match status" value="1"/>
</dbReference>
<dbReference type="HAMAP" id="MF_01595">
    <property type="entry name" value="PNPase"/>
    <property type="match status" value="1"/>
</dbReference>
<dbReference type="InterPro" id="IPR001247">
    <property type="entry name" value="ExoRNase_PH_dom1"/>
</dbReference>
<dbReference type="InterPro" id="IPR036345">
    <property type="entry name" value="ExoRNase_PH_dom2_sf"/>
</dbReference>
<dbReference type="InterPro" id="IPR014069">
    <property type="entry name" value="GPSI/PNP"/>
</dbReference>
<dbReference type="InterPro" id="IPR004087">
    <property type="entry name" value="KH_dom"/>
</dbReference>
<dbReference type="InterPro" id="IPR004088">
    <property type="entry name" value="KH_dom_type_1"/>
</dbReference>
<dbReference type="InterPro" id="IPR036612">
    <property type="entry name" value="KH_dom_type_1_sf"/>
</dbReference>
<dbReference type="InterPro" id="IPR012340">
    <property type="entry name" value="NA-bd_OB-fold"/>
</dbReference>
<dbReference type="InterPro" id="IPR012162">
    <property type="entry name" value="PNPase"/>
</dbReference>
<dbReference type="InterPro" id="IPR027408">
    <property type="entry name" value="PNPase/RNase_PH_dom_sf"/>
</dbReference>
<dbReference type="InterPro" id="IPR015848">
    <property type="entry name" value="PNPase_PH_RNA-bd_bac/org-type"/>
</dbReference>
<dbReference type="InterPro" id="IPR036456">
    <property type="entry name" value="PNPase_PH_RNA-bd_sf"/>
</dbReference>
<dbReference type="InterPro" id="IPR020568">
    <property type="entry name" value="Ribosomal_Su5_D2-typ_SF"/>
</dbReference>
<dbReference type="InterPro" id="IPR003029">
    <property type="entry name" value="S1_domain"/>
</dbReference>
<dbReference type="NCBIfam" id="TIGR03591">
    <property type="entry name" value="polynuc_phos"/>
    <property type="match status" value="1"/>
</dbReference>
<dbReference type="NCBIfam" id="TIGR02696">
    <property type="entry name" value="pppGpp_PNP"/>
    <property type="match status" value="1"/>
</dbReference>
<dbReference type="NCBIfam" id="NF008805">
    <property type="entry name" value="PRK11824.1"/>
    <property type="match status" value="1"/>
</dbReference>
<dbReference type="PANTHER" id="PTHR11252">
    <property type="entry name" value="POLYRIBONUCLEOTIDE NUCLEOTIDYLTRANSFERASE"/>
    <property type="match status" value="1"/>
</dbReference>
<dbReference type="PANTHER" id="PTHR11252:SF0">
    <property type="entry name" value="POLYRIBONUCLEOTIDE NUCLEOTIDYLTRANSFERASE 1, MITOCHONDRIAL"/>
    <property type="match status" value="1"/>
</dbReference>
<dbReference type="Pfam" id="PF00013">
    <property type="entry name" value="KH_1"/>
    <property type="match status" value="1"/>
</dbReference>
<dbReference type="Pfam" id="PF03726">
    <property type="entry name" value="PNPase"/>
    <property type="match status" value="1"/>
</dbReference>
<dbReference type="Pfam" id="PF01138">
    <property type="entry name" value="RNase_PH"/>
    <property type="match status" value="2"/>
</dbReference>
<dbReference type="Pfam" id="PF00575">
    <property type="entry name" value="S1"/>
    <property type="match status" value="1"/>
</dbReference>
<dbReference type="SMART" id="SM00322">
    <property type="entry name" value="KH"/>
    <property type="match status" value="1"/>
</dbReference>
<dbReference type="SMART" id="SM00316">
    <property type="entry name" value="S1"/>
    <property type="match status" value="1"/>
</dbReference>
<dbReference type="SUPFAM" id="SSF54791">
    <property type="entry name" value="Eukaryotic type KH-domain (KH-domain type I)"/>
    <property type="match status" value="1"/>
</dbReference>
<dbReference type="SUPFAM" id="SSF50249">
    <property type="entry name" value="Nucleic acid-binding proteins"/>
    <property type="match status" value="1"/>
</dbReference>
<dbReference type="SUPFAM" id="SSF46915">
    <property type="entry name" value="Polynucleotide phosphorylase/guanosine pentaphosphate synthase (PNPase/GPSI), domain 3"/>
    <property type="match status" value="1"/>
</dbReference>
<dbReference type="SUPFAM" id="SSF55666">
    <property type="entry name" value="Ribonuclease PH domain 2-like"/>
    <property type="match status" value="2"/>
</dbReference>
<dbReference type="SUPFAM" id="SSF54211">
    <property type="entry name" value="Ribosomal protein S5 domain 2-like"/>
    <property type="match status" value="2"/>
</dbReference>
<dbReference type="PROSITE" id="PS50084">
    <property type="entry name" value="KH_TYPE_1"/>
    <property type="match status" value="1"/>
</dbReference>
<dbReference type="PROSITE" id="PS50126">
    <property type="entry name" value="S1"/>
    <property type="match status" value="1"/>
</dbReference>